<organism>
    <name type="scientific">Staphylococcus aureus (strain Mu3 / ATCC 700698)</name>
    <dbReference type="NCBI Taxonomy" id="418127"/>
    <lineage>
        <taxon>Bacteria</taxon>
        <taxon>Bacillati</taxon>
        <taxon>Bacillota</taxon>
        <taxon>Bacilli</taxon>
        <taxon>Bacillales</taxon>
        <taxon>Staphylococcaceae</taxon>
        <taxon>Staphylococcus</taxon>
    </lineage>
</organism>
<accession>A7X2Y1</accession>
<name>DNAK_STAA1</name>
<proteinExistence type="inferred from homology"/>
<gene>
    <name evidence="1" type="primary">dnaK</name>
    <name type="ordered locus">SAHV_1567</name>
</gene>
<sequence length="610" mass="66361">MSKIIGIDLGTTNSCVTVLEGDEPKVIQNPEGSRTTPSVVAFKNGETQVGEVAKRQAITNPNTVQSIKRHMGTDYKVDIEGKSYTPQEISAMILQNLKNTAESYLGEKVDKAVITVPAYFNDAERQATKDAGKIAGLEVERIINEPTAAALAYGLDKTDKDEKVLVFDLGGGTFDVSILELGDGVFEVLSTAGDNKLGGDDFDQVIIDYLVAEFKKENGVDLSQDKMALQRLKDAAEKAKKDLSGVSQTQISLPFISAGENGPLHLEVNLTRSKFEELSDSLIRRTMEPTRQAMKDAGLTNSDIDEVILVGGSTRIPAVQEAVKKEIGKEPNKGVNPDEVVAMGAAIQGGVITGDVKDVVLLDVTPLSLGIEILGGRMNTLIERNTTIPTSKSQIYSTAVDNQPSVDVHVLQGERPMAADNKTLGRFQLTDIPPAERGKPQIEVTFDIDKNGIVNVTAKDLGTNKEQRITIQSSSSLSDEEIDRMVKDAEVNAEADKKRREEVDLRNEADSLVFQVEKTLTDLGENIGEEDKKSAEEKKDALKTALEGQDIEDIKSKKEELEKVIQELSAKVYEQAAQQQQQAQGANAGQNNDSTVEDAEFKEVKDDDKK</sequence>
<evidence type="ECO:0000255" key="1">
    <source>
        <dbReference type="HAMAP-Rule" id="MF_00332"/>
    </source>
</evidence>
<evidence type="ECO:0000256" key="2">
    <source>
        <dbReference type="SAM" id="MobiDB-lite"/>
    </source>
</evidence>
<protein>
    <recommendedName>
        <fullName evidence="1">Chaperone protein DnaK</fullName>
    </recommendedName>
    <alternativeName>
        <fullName evidence="1">HSP70</fullName>
    </alternativeName>
    <alternativeName>
        <fullName evidence="1">Heat shock 70 kDa protein</fullName>
    </alternativeName>
    <alternativeName>
        <fullName evidence="1">Heat shock protein 70</fullName>
    </alternativeName>
</protein>
<dbReference type="EMBL" id="AP009324">
    <property type="protein sequence ID" value="BAF78450.1"/>
    <property type="molecule type" value="Genomic_DNA"/>
</dbReference>
<dbReference type="RefSeq" id="WP_000034716.1">
    <property type="nucleotide sequence ID" value="NZ_CTYB01000003.1"/>
</dbReference>
<dbReference type="SMR" id="A7X2Y1"/>
<dbReference type="KEGG" id="saw:SAHV_1567"/>
<dbReference type="HOGENOM" id="CLU_005965_2_4_9"/>
<dbReference type="GO" id="GO:0005524">
    <property type="term" value="F:ATP binding"/>
    <property type="evidence" value="ECO:0007669"/>
    <property type="project" value="UniProtKB-UniRule"/>
</dbReference>
<dbReference type="GO" id="GO:0140662">
    <property type="term" value="F:ATP-dependent protein folding chaperone"/>
    <property type="evidence" value="ECO:0007669"/>
    <property type="project" value="InterPro"/>
</dbReference>
<dbReference type="GO" id="GO:0051082">
    <property type="term" value="F:unfolded protein binding"/>
    <property type="evidence" value="ECO:0007669"/>
    <property type="project" value="InterPro"/>
</dbReference>
<dbReference type="CDD" id="cd10234">
    <property type="entry name" value="ASKHA_NBD_HSP70_DnaK-like"/>
    <property type="match status" value="1"/>
</dbReference>
<dbReference type="FunFam" id="2.60.34.10:FF:000014">
    <property type="entry name" value="Chaperone protein DnaK HSP70"/>
    <property type="match status" value="1"/>
</dbReference>
<dbReference type="FunFam" id="1.20.1270.10:FF:000001">
    <property type="entry name" value="Molecular chaperone DnaK"/>
    <property type="match status" value="1"/>
</dbReference>
<dbReference type="FunFam" id="3.30.420.40:FF:000071">
    <property type="entry name" value="Molecular chaperone DnaK"/>
    <property type="match status" value="1"/>
</dbReference>
<dbReference type="FunFam" id="3.90.640.10:FF:000003">
    <property type="entry name" value="Molecular chaperone DnaK"/>
    <property type="match status" value="1"/>
</dbReference>
<dbReference type="Gene3D" id="1.20.1270.10">
    <property type="match status" value="1"/>
</dbReference>
<dbReference type="Gene3D" id="3.30.420.40">
    <property type="match status" value="2"/>
</dbReference>
<dbReference type="Gene3D" id="3.90.640.10">
    <property type="entry name" value="Actin, Chain A, domain 4"/>
    <property type="match status" value="1"/>
</dbReference>
<dbReference type="Gene3D" id="2.60.34.10">
    <property type="entry name" value="Substrate Binding Domain Of DNAk, Chain A, domain 1"/>
    <property type="match status" value="1"/>
</dbReference>
<dbReference type="HAMAP" id="MF_00332">
    <property type="entry name" value="DnaK"/>
    <property type="match status" value="1"/>
</dbReference>
<dbReference type="InterPro" id="IPR043129">
    <property type="entry name" value="ATPase_NBD"/>
</dbReference>
<dbReference type="InterPro" id="IPR012725">
    <property type="entry name" value="Chaperone_DnaK"/>
</dbReference>
<dbReference type="InterPro" id="IPR018181">
    <property type="entry name" value="Heat_shock_70_CS"/>
</dbReference>
<dbReference type="InterPro" id="IPR029048">
    <property type="entry name" value="HSP70_C_sf"/>
</dbReference>
<dbReference type="InterPro" id="IPR029047">
    <property type="entry name" value="HSP70_peptide-bd_sf"/>
</dbReference>
<dbReference type="InterPro" id="IPR013126">
    <property type="entry name" value="Hsp_70_fam"/>
</dbReference>
<dbReference type="NCBIfam" id="NF001413">
    <property type="entry name" value="PRK00290.1"/>
    <property type="match status" value="1"/>
</dbReference>
<dbReference type="NCBIfam" id="TIGR02350">
    <property type="entry name" value="prok_dnaK"/>
    <property type="match status" value="1"/>
</dbReference>
<dbReference type="PANTHER" id="PTHR19375">
    <property type="entry name" value="HEAT SHOCK PROTEIN 70KDA"/>
    <property type="match status" value="1"/>
</dbReference>
<dbReference type="Pfam" id="PF00012">
    <property type="entry name" value="HSP70"/>
    <property type="match status" value="1"/>
</dbReference>
<dbReference type="PRINTS" id="PR00301">
    <property type="entry name" value="HEATSHOCK70"/>
</dbReference>
<dbReference type="SUPFAM" id="SSF53067">
    <property type="entry name" value="Actin-like ATPase domain"/>
    <property type="match status" value="2"/>
</dbReference>
<dbReference type="SUPFAM" id="SSF100934">
    <property type="entry name" value="Heat shock protein 70kD (HSP70), C-terminal subdomain"/>
    <property type="match status" value="1"/>
</dbReference>
<dbReference type="SUPFAM" id="SSF100920">
    <property type="entry name" value="Heat shock protein 70kD (HSP70), peptide-binding domain"/>
    <property type="match status" value="1"/>
</dbReference>
<dbReference type="PROSITE" id="PS00297">
    <property type="entry name" value="HSP70_1"/>
    <property type="match status" value="1"/>
</dbReference>
<dbReference type="PROSITE" id="PS00329">
    <property type="entry name" value="HSP70_2"/>
    <property type="match status" value="1"/>
</dbReference>
<dbReference type="PROSITE" id="PS01036">
    <property type="entry name" value="HSP70_3"/>
    <property type="match status" value="1"/>
</dbReference>
<reference key="1">
    <citation type="journal article" date="2008" name="Antimicrob. Agents Chemother.">
        <title>Mutated response regulator graR is responsible for phenotypic conversion of Staphylococcus aureus from heterogeneous vancomycin-intermediate resistance to vancomycin-intermediate resistance.</title>
        <authorList>
            <person name="Neoh H.-M."/>
            <person name="Cui L."/>
            <person name="Yuzawa H."/>
            <person name="Takeuchi F."/>
            <person name="Matsuo M."/>
            <person name="Hiramatsu K."/>
        </authorList>
    </citation>
    <scope>NUCLEOTIDE SEQUENCE [LARGE SCALE GENOMIC DNA]</scope>
    <source>
        <strain>Mu3 / ATCC 700698</strain>
    </source>
</reference>
<feature type="chain" id="PRO_1000059675" description="Chaperone protein DnaK">
    <location>
        <begin position="1"/>
        <end position="610"/>
    </location>
</feature>
<feature type="region of interest" description="Disordered" evidence="2">
    <location>
        <begin position="525"/>
        <end position="544"/>
    </location>
</feature>
<feature type="region of interest" description="Disordered" evidence="2">
    <location>
        <begin position="576"/>
        <end position="610"/>
    </location>
</feature>
<feature type="compositionally biased region" description="Basic and acidic residues" evidence="2">
    <location>
        <begin position="529"/>
        <end position="542"/>
    </location>
</feature>
<feature type="compositionally biased region" description="Low complexity" evidence="2">
    <location>
        <begin position="576"/>
        <end position="592"/>
    </location>
</feature>
<feature type="compositionally biased region" description="Basic and acidic residues" evidence="2">
    <location>
        <begin position="599"/>
        <end position="610"/>
    </location>
</feature>
<feature type="modified residue" description="Phosphothreonine; by autocatalysis" evidence="1">
    <location>
        <position position="173"/>
    </location>
</feature>
<comment type="function">
    <text evidence="1">Acts as a chaperone.</text>
</comment>
<comment type="induction">
    <text evidence="1">By stress conditions e.g. heat shock.</text>
</comment>
<comment type="similarity">
    <text evidence="1">Belongs to the heat shock protein 70 family.</text>
</comment>
<keyword id="KW-0067">ATP-binding</keyword>
<keyword id="KW-0143">Chaperone</keyword>
<keyword id="KW-0547">Nucleotide-binding</keyword>
<keyword id="KW-0597">Phosphoprotein</keyword>
<keyword id="KW-0346">Stress response</keyword>